<feature type="chain" id="PRO_0000378997" description="WD repeat-containing protein on Y chromosome">
    <location>
        <begin position="1"/>
        <end position="1217"/>
    </location>
</feature>
<feature type="repeat" description="WD 1" evidence="1">
    <location>
        <begin position="155"/>
        <end position="199"/>
    </location>
</feature>
<feature type="repeat" description="WD 2" evidence="1">
    <location>
        <begin position="323"/>
        <end position="362"/>
    </location>
</feature>
<feature type="repeat" description="WD 3" evidence="1">
    <location>
        <begin position="366"/>
        <end position="405"/>
    </location>
</feature>
<feature type="repeat" description="WD 4" evidence="1">
    <location>
        <begin position="456"/>
        <end position="495"/>
    </location>
</feature>
<feature type="repeat" description="WD 5" evidence="1">
    <location>
        <begin position="508"/>
        <end position="547"/>
    </location>
</feature>
<feature type="repeat" description="WD 6" evidence="1">
    <location>
        <begin position="595"/>
        <end position="635"/>
    </location>
</feature>
<feature type="repeat" description="WD 7" evidence="1">
    <location>
        <begin position="740"/>
        <end position="779"/>
    </location>
</feature>
<feature type="repeat" description="WD 8" evidence="1">
    <location>
        <begin position="823"/>
        <end position="862"/>
    </location>
</feature>
<feature type="region of interest" description="Disordered" evidence="2">
    <location>
        <begin position="910"/>
        <end position="929"/>
    </location>
</feature>
<feature type="region of interest" description="Disordered" evidence="2">
    <location>
        <begin position="1033"/>
        <end position="1217"/>
    </location>
</feature>
<feature type="compositionally biased region" description="Acidic residues" evidence="2">
    <location>
        <begin position="919"/>
        <end position="929"/>
    </location>
</feature>
<feature type="compositionally biased region" description="Polar residues" evidence="2">
    <location>
        <begin position="1041"/>
        <end position="1054"/>
    </location>
</feature>
<feature type="compositionally biased region" description="Polar residues" evidence="2">
    <location>
        <begin position="1085"/>
        <end position="1107"/>
    </location>
</feature>
<feature type="compositionally biased region" description="Polar residues" evidence="2">
    <location>
        <begin position="1137"/>
        <end position="1179"/>
    </location>
</feature>
<feature type="compositionally biased region" description="Low complexity" evidence="2">
    <location>
        <begin position="1181"/>
        <end position="1190"/>
    </location>
</feature>
<feature type="compositionally biased region" description="Polar residues" evidence="2">
    <location>
        <begin position="1198"/>
        <end position="1210"/>
    </location>
</feature>
<proteinExistence type="predicted"/>
<name>WDY_DROMO</name>
<comment type="sequence caution" evidence="5">
    <conflict type="erroneous gene model prediction">
        <sequence resource="EMBL-CDS" id="EDW11275"/>
    </conflict>
</comment>
<gene>
    <name evidence="6" type="primary">WDY</name>
    <name type="ORF">GI17063</name>
</gene>
<organism>
    <name type="scientific">Drosophila mojavensis</name>
    <name type="common">Fruit fly</name>
    <dbReference type="NCBI Taxonomy" id="7230"/>
    <lineage>
        <taxon>Eukaryota</taxon>
        <taxon>Metazoa</taxon>
        <taxon>Ecdysozoa</taxon>
        <taxon>Arthropoda</taxon>
        <taxon>Hexapoda</taxon>
        <taxon>Insecta</taxon>
        <taxon>Pterygota</taxon>
        <taxon>Neoptera</taxon>
        <taxon>Endopterygota</taxon>
        <taxon>Diptera</taxon>
        <taxon>Brachycera</taxon>
        <taxon>Muscomorpha</taxon>
        <taxon>Ephydroidea</taxon>
        <taxon>Drosophilidae</taxon>
        <taxon>Drosophila</taxon>
    </lineage>
</organism>
<sequence>MSLIYFASGDSHANIEYQTISSTATEANQEQSERLHDRISKAQLQRLYERFKSAPDQVVGCADFRRMLEEVDIVFSDFTYTRLFLKINQNHDFLVDWNEFVSYLIFGFQEEDPSSQKESLIMPISAAPVVRKTEHRSAVCCITLLKVKSDQTPLEDMTESANYSFGGEDSPENSGMWVTASHEGQLRFWSAHMEPLRSAVSESIYCMSYAFYNNGKTHSKLVLGDYAGNVRILSYSPYLRGPFQAKPGAALVELTWADVLRGRIPLLIPKEYINLHNELISCVYYSLHMNALFASAEYRNTKKYRGRCPGLIMVSNDDRNNFRIPLGVSVFYVSEVKNILVTGGPDTFVRIWDVYISSEPSAILTGHNGGIVAVFVQPEENKVYSVDYHKIIKVWDLQEHTLLQTYGELVRIIHHSEMDIKYYYHSHLRELMVAGRKLIQVKCCPRVRVDLTDGNTHAAPVSVVLYNRLFRNIVTCGLDSYIIVWDPWTGRRKIIMKNCHTKMIYGETIDIEITAACFDPLEQFLLTGARDGSLKIWNYNNSVVVRNMSIQMDQEVTAVIWVVDRILAMGWDRQVTEFNDVEGREYGDPKKWAKFHTDDITCADVKLGEGVVTATYSGEIIFWKLETGQPYRRYNVMDPSQFIELKLTAEEEKLSRRSKRISSLLGANRRSASMLAIKPDEIKDYGANIPVSVQAVLFLQKRPMTKDHGSVFISLDTGIIQVYSHHQHGGHIKEFIAVHKVGDCVLTMATDRKNRFLYTGTAFGYIKIWHIVNYCIPEAEKTHVCMPKLRLDFIFLRKELFLTRAKRMVRNQPEPMLVSSYKGHLKAINSIGFINLPKILFSGSHDYSCRLWTQSGRYLGTLGTVLPWSKLSPFERAGEENRPYRLPPDIKKVASSTTLKVISGVQHSFQVKRPKPTEEREDEGEVEDTGTEMKNIFDRPLREPILGKHFELPGRSAIEQRIELDTTQLYVPIYSHLRVHPSDVMENLPTPPIIGQVKSENYLDHYMPVVGKVDPNTSAINIREPNKVIRSKAGGQVGQARASSTWGKPKTNSILGMPRAESSQGKARASSAKAGVSSGYGRTNFGPNPSRVRSNSPKVSFMPSQLKTCRKPESSPRKAKTSPARAKSVSFPAKANPVSTSAKANPTCTSVKTNPVPTSAKASRVSTSAKSNPVSTSANAKPDIMPVKIKPVVKKPSRNTAPVQITTSIAKTKKDKP</sequence>
<dbReference type="EMBL" id="CH933807">
    <property type="protein sequence ID" value="EDW11275.1"/>
    <property type="status" value="ALT_SEQ"/>
    <property type="molecule type" value="Genomic_DNA"/>
</dbReference>
<dbReference type="EMBL" id="BK006444">
    <property type="protein sequence ID" value="DAA06441.1"/>
    <property type="molecule type" value="Genomic_DNA"/>
</dbReference>
<dbReference type="GeneID" id="6575829"/>
<dbReference type="KEGG" id="dmo:Dmoj_GI17063"/>
<dbReference type="eggNOG" id="KOG0266">
    <property type="taxonomic scope" value="Eukaryota"/>
</dbReference>
<dbReference type="InParanoid" id="B7FF07"/>
<dbReference type="OrthoDB" id="5980302at2759"/>
<dbReference type="ChiTaRS" id="WDY">
    <property type="organism name" value="fly"/>
</dbReference>
<dbReference type="Proteomes" id="UP000009192">
    <property type="component" value="Unassembled WGS sequence"/>
</dbReference>
<dbReference type="Gene3D" id="1.10.238.10">
    <property type="entry name" value="EF-hand"/>
    <property type="match status" value="1"/>
</dbReference>
<dbReference type="Gene3D" id="2.130.10.10">
    <property type="entry name" value="YVTN repeat-like/Quinoprotein amine dehydrogenase"/>
    <property type="match status" value="2"/>
</dbReference>
<dbReference type="InterPro" id="IPR011992">
    <property type="entry name" value="EF-hand-dom_pair"/>
</dbReference>
<dbReference type="InterPro" id="IPR011041">
    <property type="entry name" value="Quinoprot_gluc/sorb_DH_b-prop"/>
</dbReference>
<dbReference type="InterPro" id="IPR051242">
    <property type="entry name" value="WD-EF-hand_domain"/>
</dbReference>
<dbReference type="InterPro" id="IPR015943">
    <property type="entry name" value="WD40/YVTN_repeat-like_dom_sf"/>
</dbReference>
<dbReference type="InterPro" id="IPR036322">
    <property type="entry name" value="WD40_repeat_dom_sf"/>
</dbReference>
<dbReference type="InterPro" id="IPR001680">
    <property type="entry name" value="WD40_rpt"/>
</dbReference>
<dbReference type="PANTHER" id="PTHR44324:SF6">
    <property type="entry name" value="EF-HAND CALCIUM BINDING DOMAIN 8"/>
    <property type="match status" value="1"/>
</dbReference>
<dbReference type="PANTHER" id="PTHR44324">
    <property type="entry name" value="WD40 REPEAT DOMAIN 95"/>
    <property type="match status" value="1"/>
</dbReference>
<dbReference type="Pfam" id="PF00400">
    <property type="entry name" value="WD40"/>
    <property type="match status" value="3"/>
</dbReference>
<dbReference type="SMART" id="SM00320">
    <property type="entry name" value="WD40"/>
    <property type="match status" value="8"/>
</dbReference>
<dbReference type="SUPFAM" id="SSF47473">
    <property type="entry name" value="EF-hand"/>
    <property type="match status" value="1"/>
</dbReference>
<dbReference type="SUPFAM" id="SSF50952">
    <property type="entry name" value="Soluble quinoprotein glucose dehydrogenase"/>
    <property type="match status" value="1"/>
</dbReference>
<dbReference type="SUPFAM" id="SSF50978">
    <property type="entry name" value="WD40 repeat-like"/>
    <property type="match status" value="1"/>
</dbReference>
<dbReference type="PROSITE" id="PS00678">
    <property type="entry name" value="WD_REPEATS_1"/>
    <property type="match status" value="1"/>
</dbReference>
<dbReference type="PROSITE" id="PS50082">
    <property type="entry name" value="WD_REPEATS_2"/>
    <property type="match status" value="4"/>
</dbReference>
<dbReference type="PROSITE" id="PS50294">
    <property type="entry name" value="WD_REPEATS_REGION"/>
    <property type="match status" value="2"/>
</dbReference>
<accession>B7FF07</accession>
<accession>B4KHZ3</accession>
<keyword id="KW-1185">Reference proteome</keyword>
<keyword id="KW-0677">Repeat</keyword>
<keyword id="KW-0853">WD repeat</keyword>
<protein>
    <recommendedName>
        <fullName evidence="4 6">WD repeat-containing protein on Y chromosome</fullName>
        <shortName evidence="4">WD40 Y</shortName>
    </recommendedName>
</protein>
<evidence type="ECO:0000255" key="1"/>
<evidence type="ECO:0000256" key="2">
    <source>
        <dbReference type="SAM" id="MobiDB-lite"/>
    </source>
</evidence>
<evidence type="ECO:0000269" key="3">
    <source>
    </source>
</evidence>
<evidence type="ECO:0000303" key="4">
    <source>
    </source>
</evidence>
<evidence type="ECO:0000305" key="5"/>
<evidence type="ECO:0000312" key="6">
    <source>
        <dbReference type="EMBL" id="DAA06441.1"/>
    </source>
</evidence>
<evidence type="ECO:0000312" key="7">
    <source>
        <dbReference type="EMBL" id="EDW11275.1"/>
    </source>
</evidence>
<reference evidence="7" key="1">
    <citation type="journal article" date="2007" name="Nature">
        <title>Evolution of genes and genomes on the Drosophila phylogeny.</title>
        <authorList>
            <consortium name="Drosophila 12 genomes consortium"/>
        </authorList>
    </citation>
    <scope>NUCLEOTIDE SEQUENCE [LARGE SCALE GENOMIC DNA]</scope>
    <source>
        <strain evidence="3">Tucson 15081-1352.22</strain>
    </source>
</reference>
<reference evidence="5 6" key="2">
    <citation type="journal article" date="2008" name="Nature">
        <title>Low conservation of gene content in the Drosophila Y chromosome.</title>
        <authorList>
            <person name="Koerich L.B."/>
            <person name="Wang X."/>
            <person name="Clark A.G."/>
            <person name="Carvalho A.B."/>
        </authorList>
    </citation>
    <scope>IDENTIFICATION</scope>
</reference>